<comment type="function">
    <text evidence="1">Antimicrobial peptide.</text>
</comment>
<comment type="subcellular location">
    <subcellularLocation>
        <location evidence="3 4 5">Secreted</location>
    </subcellularLocation>
</comment>
<comment type="tissue specificity">
    <text evidence="9">Expressed by the skin glands.</text>
</comment>
<comment type="mass spectrometry"/>
<comment type="mass spectrometry"/>
<comment type="mass spectrometry"/>
<comment type="similarity">
    <text evidence="2">Belongs to the frog skin active peptide (FSAP) family. Brevinin subfamily.</text>
</comment>
<accession>P86027</accession>
<evidence type="ECO:0000250" key="1">
    <source>
        <dbReference type="UniProtKB" id="P40835"/>
    </source>
</evidence>
<evidence type="ECO:0000255" key="2"/>
<evidence type="ECO:0000269" key="3">
    <source>
    </source>
</evidence>
<evidence type="ECO:0000269" key="4">
    <source>
    </source>
</evidence>
<evidence type="ECO:0000269" key="5">
    <source ref="1"/>
</evidence>
<evidence type="ECO:0000303" key="6">
    <source>
    </source>
</evidence>
<evidence type="ECO:0000303" key="7">
    <source ref="1"/>
</evidence>
<evidence type="ECO:0000305" key="8"/>
<evidence type="ECO:0000305" key="9">
    <source ref="1"/>
</evidence>
<proteinExistence type="evidence at protein level"/>
<sequence>FFPAIFRLVAKVVPSIICSVTKKC</sequence>
<protein>
    <recommendedName>
        <fullName evidence="7">Brevinin-1R</fullName>
    </recommendedName>
</protein>
<dbReference type="GO" id="GO:0005576">
    <property type="term" value="C:extracellular region"/>
    <property type="evidence" value="ECO:0007669"/>
    <property type="project" value="UniProtKB-SubCell"/>
</dbReference>
<dbReference type="GO" id="GO:0042742">
    <property type="term" value="P:defense response to bacterium"/>
    <property type="evidence" value="ECO:0007669"/>
    <property type="project" value="UniProtKB-KW"/>
</dbReference>
<dbReference type="InterPro" id="IPR012520">
    <property type="entry name" value="Antimicrobial_frog_1"/>
</dbReference>
<dbReference type="Pfam" id="PF08018">
    <property type="entry name" value="Antimicrobial_1"/>
    <property type="match status" value="1"/>
</dbReference>
<feature type="peptide" id="PRO_0000351555" description="Brevinin-1R" evidence="3 4 5">
    <location>
        <begin position="1"/>
        <end position="24"/>
    </location>
</feature>
<feature type="disulfide bond" evidence="3 4">
    <location>
        <begin position="18"/>
        <end position="24"/>
    </location>
</feature>
<keyword id="KW-0878">Amphibian defense peptide</keyword>
<keyword id="KW-0044">Antibiotic</keyword>
<keyword id="KW-0929">Antimicrobial</keyword>
<keyword id="KW-0903">Direct protein sequencing</keyword>
<keyword id="KW-1015">Disulfide bond</keyword>
<keyword id="KW-0964">Secreted</keyword>
<organism>
    <name type="scientific">Pelophylax ridibundus</name>
    <name type="common">Marsh frog</name>
    <name type="synonym">Rana ridibunda</name>
    <dbReference type="NCBI Taxonomy" id="8406"/>
    <lineage>
        <taxon>Eukaryota</taxon>
        <taxon>Metazoa</taxon>
        <taxon>Chordata</taxon>
        <taxon>Craniata</taxon>
        <taxon>Vertebrata</taxon>
        <taxon>Euteleostomi</taxon>
        <taxon>Amphibia</taxon>
        <taxon>Batrachia</taxon>
        <taxon>Anura</taxon>
        <taxon>Neobatrachia</taxon>
        <taxon>Ranoidea</taxon>
        <taxon>Ranidae</taxon>
        <taxon>Pelophylax</taxon>
    </lineage>
</organism>
<reference evidence="8" key="1">
    <citation type="journal article" date="2007" name="Mass Spectrom.">
        <title>Host-defence peptides from the skin secretion of the European marsh frog Rana ridibunda.</title>
        <authorList>
            <person name="Artemenko K.A."/>
            <person name="Samgina T.Y."/>
            <person name="Lebedev A.T."/>
            <person name="Doyle J.R."/>
            <person name="Llewellyn L.E."/>
            <person name="Bilusich D."/>
            <person name="Bowie J.H."/>
        </authorList>
    </citation>
    <scope>PROTEIN SEQUENCE</scope>
    <scope>MASS SPECTROMETRY</scope>
    <source>
        <tissue evidence="5">Skin secretion</tissue>
    </source>
</reference>
<reference evidence="8" key="2">
    <citation type="journal article" date="2008" name="Rapid Commun. Mass Spectrom.">
        <title>De novo sequencing of peptides secreted by the skin glands of the caucasian green frog Rana ridibunda.</title>
        <authorList>
            <person name="Samgina T.Y."/>
            <person name="Artemenko K.A."/>
            <person name="Gorshkov V.A."/>
            <person name="Ogourtsov S.V."/>
            <person name="Zubarev R.A."/>
            <person name="Lebedev A.T."/>
        </authorList>
    </citation>
    <scope>PROTEIN SEQUENCE</scope>
    <scope>MASS SPECTROMETRY</scope>
    <scope>DISULFIDE BOND</scope>
    <source>
        <tissue evidence="3">Skin secretion</tissue>
    </source>
</reference>
<reference key="3">
    <citation type="journal article" date="2017" name="Anal. Bioanal. Chem.">
        <title>Differentiation of frogs from two populations belonging to the Pelophylax esculentus complex by LC-MS/MS comparison of their skin peptidomes.</title>
        <authorList>
            <person name="Samgina T.Y."/>
            <person name="Artemenko K.A."/>
            <person name="Bergquist J."/>
            <person name="Trebse P."/>
            <person name="Torkar G."/>
            <person name="Tolpina M.D."/>
            <person name="Lebedev A.T."/>
        </authorList>
    </citation>
    <scope>PROTEIN SEQUENCE</scope>
    <scope>SUBCELLULAR LOCATION</scope>
    <scope>DISULFIDE BOND</scope>
    <scope>MASS SPECTROMETRY</scope>
    <scope>IDENTIFICATION BY MASS SPECTROMETRY</scope>
    <source>
        <tissue evidence="6">Skin secretion</tissue>
    </source>
</reference>
<name>BR1_PELRI</name>